<dbReference type="EC" id="2.4.2.29" evidence="1"/>
<dbReference type="EMBL" id="CP000285">
    <property type="protein sequence ID" value="ABE60179.1"/>
    <property type="molecule type" value="Genomic_DNA"/>
</dbReference>
<dbReference type="SMR" id="Q1QTM9"/>
<dbReference type="STRING" id="290398.Csal_2833"/>
<dbReference type="KEGG" id="csa:Csal_2833"/>
<dbReference type="eggNOG" id="COG0343">
    <property type="taxonomic scope" value="Bacteria"/>
</dbReference>
<dbReference type="HOGENOM" id="CLU_022060_0_1_6"/>
<dbReference type="OrthoDB" id="9805417at2"/>
<dbReference type="UniPathway" id="UPA00392"/>
<dbReference type="Proteomes" id="UP000000239">
    <property type="component" value="Chromosome"/>
</dbReference>
<dbReference type="GO" id="GO:0005829">
    <property type="term" value="C:cytosol"/>
    <property type="evidence" value="ECO:0007669"/>
    <property type="project" value="TreeGrafter"/>
</dbReference>
<dbReference type="GO" id="GO:0046872">
    <property type="term" value="F:metal ion binding"/>
    <property type="evidence" value="ECO:0007669"/>
    <property type="project" value="UniProtKB-KW"/>
</dbReference>
<dbReference type="GO" id="GO:0008479">
    <property type="term" value="F:tRNA-guanosine(34) queuine transglycosylase activity"/>
    <property type="evidence" value="ECO:0007669"/>
    <property type="project" value="UniProtKB-UniRule"/>
</dbReference>
<dbReference type="GO" id="GO:0008616">
    <property type="term" value="P:queuosine biosynthetic process"/>
    <property type="evidence" value="ECO:0007669"/>
    <property type="project" value="UniProtKB-UniRule"/>
</dbReference>
<dbReference type="GO" id="GO:0002099">
    <property type="term" value="P:tRNA wobble guanine modification"/>
    <property type="evidence" value="ECO:0007669"/>
    <property type="project" value="TreeGrafter"/>
</dbReference>
<dbReference type="GO" id="GO:0101030">
    <property type="term" value="P:tRNA-guanine transglycosylation"/>
    <property type="evidence" value="ECO:0007669"/>
    <property type="project" value="InterPro"/>
</dbReference>
<dbReference type="FunFam" id="3.20.20.105:FF:000001">
    <property type="entry name" value="Queuine tRNA-ribosyltransferase"/>
    <property type="match status" value="1"/>
</dbReference>
<dbReference type="Gene3D" id="3.20.20.105">
    <property type="entry name" value="Queuine tRNA-ribosyltransferase-like"/>
    <property type="match status" value="1"/>
</dbReference>
<dbReference type="HAMAP" id="MF_00168">
    <property type="entry name" value="Q_tRNA_Tgt"/>
    <property type="match status" value="1"/>
</dbReference>
<dbReference type="InterPro" id="IPR050076">
    <property type="entry name" value="ArchSynthase1/Queuine_TRR"/>
</dbReference>
<dbReference type="InterPro" id="IPR004803">
    <property type="entry name" value="TGT"/>
</dbReference>
<dbReference type="InterPro" id="IPR036511">
    <property type="entry name" value="TGT-like_sf"/>
</dbReference>
<dbReference type="InterPro" id="IPR002616">
    <property type="entry name" value="tRNA_ribo_trans-like"/>
</dbReference>
<dbReference type="NCBIfam" id="TIGR00430">
    <property type="entry name" value="Q_tRNA_tgt"/>
    <property type="match status" value="1"/>
</dbReference>
<dbReference type="NCBIfam" id="TIGR00449">
    <property type="entry name" value="tgt_general"/>
    <property type="match status" value="1"/>
</dbReference>
<dbReference type="PANTHER" id="PTHR46499">
    <property type="entry name" value="QUEUINE TRNA-RIBOSYLTRANSFERASE"/>
    <property type="match status" value="1"/>
</dbReference>
<dbReference type="PANTHER" id="PTHR46499:SF1">
    <property type="entry name" value="QUEUINE TRNA-RIBOSYLTRANSFERASE"/>
    <property type="match status" value="1"/>
</dbReference>
<dbReference type="Pfam" id="PF01702">
    <property type="entry name" value="TGT"/>
    <property type="match status" value="1"/>
</dbReference>
<dbReference type="SUPFAM" id="SSF51713">
    <property type="entry name" value="tRNA-guanine transglycosylase"/>
    <property type="match status" value="1"/>
</dbReference>
<sequence>MRFERLAQDGQARRGRLSFPRGTVETPAFMPVGTYGTVKGMTPQSVKDIGAEIILGNTFHLWLRPGTEVIETHGDLHDFAQWDKPILTDSGGFQVFSLGDMRKITEEGVHFRSPVDGAKVFMGPEESMAVQRSLGSDIVMIFDECTPYPATEAEAKRSMEMSLRWAERSRIAHGDSPSALFGIIQGGMYPELRERSLKGLLDIGFDGLAIGGLSVGEPKEEMLKVLDYLPGWMPDDKPRYLMGVGKPEDLVEGVRRGVDMFDCVMPTRNARNGYLFTAEGTVKIRNAQHRYSTQALEADCDCHTCQHFSRSYLHHLDRCGEMLGAMLNTIHNLRYYQRVMAGLRTAIEAGTLTAFVEDFYARRGMPVPPLAA</sequence>
<gene>
    <name evidence="1" type="primary">tgt</name>
    <name type="ordered locus">Csal_2833</name>
</gene>
<reference key="1">
    <citation type="journal article" date="2011" name="Stand. Genomic Sci.">
        <title>Complete genome sequence of the halophilic and highly halotolerant Chromohalobacter salexigens type strain (1H11(T)).</title>
        <authorList>
            <person name="Copeland A."/>
            <person name="O'Connor K."/>
            <person name="Lucas S."/>
            <person name="Lapidus A."/>
            <person name="Berry K.W."/>
            <person name="Detter J.C."/>
            <person name="Del Rio T.G."/>
            <person name="Hammon N."/>
            <person name="Dalin E."/>
            <person name="Tice H."/>
            <person name="Pitluck S."/>
            <person name="Bruce D."/>
            <person name="Goodwin L."/>
            <person name="Han C."/>
            <person name="Tapia R."/>
            <person name="Saunders E."/>
            <person name="Schmutz J."/>
            <person name="Brettin T."/>
            <person name="Larimer F."/>
            <person name="Land M."/>
            <person name="Hauser L."/>
            <person name="Vargas C."/>
            <person name="Nieto J.J."/>
            <person name="Kyrpides N.C."/>
            <person name="Ivanova N."/>
            <person name="Goker M."/>
            <person name="Klenk H.P."/>
            <person name="Csonka L.N."/>
            <person name="Woyke T."/>
        </authorList>
    </citation>
    <scope>NUCLEOTIDE SEQUENCE [LARGE SCALE GENOMIC DNA]</scope>
    <source>
        <strain>ATCC BAA-138 / DSM 3043 / CIP 106854 / NCIMB 13768 / 1H11</strain>
    </source>
</reference>
<comment type="function">
    <text evidence="1">Catalyzes the base-exchange of a guanine (G) residue with the queuine precursor 7-aminomethyl-7-deazaguanine (PreQ1) at position 34 (anticodon wobble position) in tRNAs with GU(N) anticodons (tRNA-Asp, -Asn, -His and -Tyr). Catalysis occurs through a double-displacement mechanism. The nucleophile active site attacks the C1' of nucleotide 34 to detach the guanine base from the RNA, forming a covalent enzyme-RNA intermediate. The proton acceptor active site deprotonates the incoming PreQ1, allowing a nucleophilic attack on the C1' of the ribose to form the product. After dissociation, two additional enzymatic reactions on the tRNA convert PreQ1 to queuine (Q), resulting in the hypermodified nucleoside queuosine (7-(((4,5-cis-dihydroxy-2-cyclopenten-1-yl)amino)methyl)-7-deazaguanosine).</text>
</comment>
<comment type="catalytic activity">
    <reaction evidence="1">
        <text>7-aminomethyl-7-carbaguanine + guanosine(34) in tRNA = 7-aminomethyl-7-carbaguanosine(34) in tRNA + guanine</text>
        <dbReference type="Rhea" id="RHEA:24104"/>
        <dbReference type="Rhea" id="RHEA-COMP:10341"/>
        <dbReference type="Rhea" id="RHEA-COMP:10342"/>
        <dbReference type="ChEBI" id="CHEBI:16235"/>
        <dbReference type="ChEBI" id="CHEBI:58703"/>
        <dbReference type="ChEBI" id="CHEBI:74269"/>
        <dbReference type="ChEBI" id="CHEBI:82833"/>
        <dbReference type="EC" id="2.4.2.29"/>
    </reaction>
</comment>
<comment type="cofactor">
    <cofactor evidence="1">
        <name>Zn(2+)</name>
        <dbReference type="ChEBI" id="CHEBI:29105"/>
    </cofactor>
    <text evidence="1">Binds 1 zinc ion per subunit.</text>
</comment>
<comment type="pathway">
    <text evidence="1">tRNA modification; tRNA-queuosine biosynthesis.</text>
</comment>
<comment type="subunit">
    <text evidence="1">Homodimer. Within each dimer, one monomer is responsible for RNA recognition and catalysis, while the other monomer binds to the replacement base PreQ1.</text>
</comment>
<comment type="similarity">
    <text evidence="1">Belongs to the queuine tRNA-ribosyltransferase family.</text>
</comment>
<proteinExistence type="inferred from homology"/>
<evidence type="ECO:0000255" key="1">
    <source>
        <dbReference type="HAMAP-Rule" id="MF_00168"/>
    </source>
</evidence>
<name>TGT_CHRSD</name>
<organism>
    <name type="scientific">Chromohalobacter salexigens (strain ATCC BAA-138 / DSM 3043 / CIP 106854 / NCIMB 13768 / 1H11)</name>
    <dbReference type="NCBI Taxonomy" id="290398"/>
    <lineage>
        <taxon>Bacteria</taxon>
        <taxon>Pseudomonadati</taxon>
        <taxon>Pseudomonadota</taxon>
        <taxon>Gammaproteobacteria</taxon>
        <taxon>Oceanospirillales</taxon>
        <taxon>Halomonadaceae</taxon>
        <taxon>Chromohalobacter</taxon>
    </lineage>
</organism>
<protein>
    <recommendedName>
        <fullName evidence="1">Queuine tRNA-ribosyltransferase</fullName>
        <ecNumber evidence="1">2.4.2.29</ecNumber>
    </recommendedName>
    <alternativeName>
        <fullName evidence="1">Guanine insertion enzyme</fullName>
    </alternativeName>
    <alternativeName>
        <fullName evidence="1">tRNA-guanine transglycosylase</fullName>
    </alternativeName>
</protein>
<keyword id="KW-0328">Glycosyltransferase</keyword>
<keyword id="KW-0479">Metal-binding</keyword>
<keyword id="KW-0671">Queuosine biosynthesis</keyword>
<keyword id="KW-1185">Reference proteome</keyword>
<keyword id="KW-0808">Transferase</keyword>
<keyword id="KW-0819">tRNA processing</keyword>
<keyword id="KW-0862">Zinc</keyword>
<accession>Q1QTM9</accession>
<feature type="chain" id="PRO_1000016776" description="Queuine tRNA-ribosyltransferase">
    <location>
        <begin position="1"/>
        <end position="372"/>
    </location>
</feature>
<feature type="region of interest" description="RNA binding" evidence="1">
    <location>
        <begin position="243"/>
        <end position="249"/>
    </location>
</feature>
<feature type="region of interest" description="RNA binding; important for wobble base 34 recognition" evidence="1">
    <location>
        <begin position="267"/>
        <end position="271"/>
    </location>
</feature>
<feature type="active site" description="Proton acceptor" evidence="1">
    <location>
        <position position="89"/>
    </location>
</feature>
<feature type="active site" description="Nucleophile" evidence="1">
    <location>
        <position position="262"/>
    </location>
</feature>
<feature type="binding site" evidence="1">
    <location>
        <begin position="89"/>
        <end position="93"/>
    </location>
    <ligand>
        <name>substrate</name>
    </ligand>
</feature>
<feature type="binding site" evidence="1">
    <location>
        <position position="143"/>
    </location>
    <ligand>
        <name>substrate</name>
    </ligand>
</feature>
<feature type="binding site" evidence="1">
    <location>
        <position position="185"/>
    </location>
    <ligand>
        <name>substrate</name>
    </ligand>
</feature>
<feature type="binding site" evidence="1">
    <location>
        <position position="212"/>
    </location>
    <ligand>
        <name>substrate</name>
    </ligand>
</feature>
<feature type="binding site" evidence="1">
    <location>
        <position position="300"/>
    </location>
    <ligand>
        <name>Zn(2+)</name>
        <dbReference type="ChEBI" id="CHEBI:29105"/>
    </ligand>
</feature>
<feature type="binding site" evidence="1">
    <location>
        <position position="302"/>
    </location>
    <ligand>
        <name>Zn(2+)</name>
        <dbReference type="ChEBI" id="CHEBI:29105"/>
    </ligand>
</feature>
<feature type="binding site" evidence="1">
    <location>
        <position position="305"/>
    </location>
    <ligand>
        <name>Zn(2+)</name>
        <dbReference type="ChEBI" id="CHEBI:29105"/>
    </ligand>
</feature>
<feature type="binding site" evidence="1">
    <location>
        <position position="331"/>
    </location>
    <ligand>
        <name>Zn(2+)</name>
        <dbReference type="ChEBI" id="CHEBI:29105"/>
    </ligand>
</feature>